<protein>
    <recommendedName>
        <fullName evidence="1">Large ribosomal subunit protein uL11</fullName>
    </recommendedName>
    <alternativeName>
        <fullName evidence="2">50S ribosomal protein L11</fullName>
    </alternativeName>
</protein>
<sequence length="141" mass="14703">MAKKVVGMIKLQLPAGKASPAPPVGPALGQHGVNIMGFCKEFNAKTANQAGLIIPVVITVYQDRSFSFILKTPPAAVLLKKAAGIESGSGVPNKTKVAKVTKDQIREIAETKMPDLNAGSIETAMSMIAGTARSMGITVEE</sequence>
<feature type="chain" id="PRO_1000195604" description="Large ribosomal subunit protein uL11">
    <location>
        <begin position="1"/>
        <end position="141"/>
    </location>
</feature>
<reference key="1">
    <citation type="journal article" date="2007" name="PLoS ONE">
        <title>Analysis of the neurotoxin complex genes in Clostridium botulinum A1-A4 and B1 strains: BoNT/A3, /Ba4 and /B1 clusters are located within plasmids.</title>
        <authorList>
            <person name="Smith T.J."/>
            <person name="Hill K.K."/>
            <person name="Foley B.T."/>
            <person name="Detter J.C."/>
            <person name="Munk A.C."/>
            <person name="Bruce D.C."/>
            <person name="Doggett N.A."/>
            <person name="Smith L.A."/>
            <person name="Marks J.D."/>
            <person name="Xie G."/>
            <person name="Brettin T.S."/>
        </authorList>
    </citation>
    <scope>NUCLEOTIDE SEQUENCE [LARGE SCALE GENOMIC DNA]</scope>
    <source>
        <strain>Okra / Type B1</strain>
    </source>
</reference>
<accession>B1IGG6</accession>
<proteinExistence type="inferred from homology"/>
<comment type="function">
    <text evidence="1">Forms part of the ribosomal stalk which helps the ribosome interact with GTP-bound translation factors.</text>
</comment>
<comment type="subunit">
    <text evidence="1">Part of the ribosomal stalk of the 50S ribosomal subunit. Interacts with L10 and the large rRNA to form the base of the stalk. L10 forms an elongated spine to which L12 dimers bind in a sequential fashion forming a multimeric L10(L12)X complex.</text>
</comment>
<comment type="PTM">
    <text evidence="1">One or more lysine residues are methylated.</text>
</comment>
<comment type="similarity">
    <text evidence="1">Belongs to the universal ribosomal protein uL11 family.</text>
</comment>
<gene>
    <name evidence="1" type="primary">rplK</name>
    <name type="ordered locus">CLD_1012</name>
</gene>
<organism>
    <name type="scientific">Clostridium botulinum (strain Okra / Type B1)</name>
    <dbReference type="NCBI Taxonomy" id="498213"/>
    <lineage>
        <taxon>Bacteria</taxon>
        <taxon>Bacillati</taxon>
        <taxon>Bacillota</taxon>
        <taxon>Clostridia</taxon>
        <taxon>Eubacteriales</taxon>
        <taxon>Clostridiaceae</taxon>
        <taxon>Clostridium</taxon>
    </lineage>
</organism>
<name>RL11_CLOBK</name>
<evidence type="ECO:0000255" key="1">
    <source>
        <dbReference type="HAMAP-Rule" id="MF_00736"/>
    </source>
</evidence>
<evidence type="ECO:0000305" key="2"/>
<keyword id="KW-0488">Methylation</keyword>
<keyword id="KW-0687">Ribonucleoprotein</keyword>
<keyword id="KW-0689">Ribosomal protein</keyword>
<keyword id="KW-0694">RNA-binding</keyword>
<keyword id="KW-0699">rRNA-binding</keyword>
<dbReference type="EMBL" id="CP000939">
    <property type="protein sequence ID" value="ACA44272.1"/>
    <property type="molecule type" value="Genomic_DNA"/>
</dbReference>
<dbReference type="RefSeq" id="WP_003357261.1">
    <property type="nucleotide sequence ID" value="NC_010516.1"/>
</dbReference>
<dbReference type="SMR" id="B1IGG6"/>
<dbReference type="GeneID" id="5186670"/>
<dbReference type="KEGG" id="cbb:CLD_1012"/>
<dbReference type="HOGENOM" id="CLU_074237_2_1_9"/>
<dbReference type="Proteomes" id="UP000008541">
    <property type="component" value="Chromosome"/>
</dbReference>
<dbReference type="GO" id="GO:0022625">
    <property type="term" value="C:cytosolic large ribosomal subunit"/>
    <property type="evidence" value="ECO:0007669"/>
    <property type="project" value="TreeGrafter"/>
</dbReference>
<dbReference type="GO" id="GO:0070180">
    <property type="term" value="F:large ribosomal subunit rRNA binding"/>
    <property type="evidence" value="ECO:0007669"/>
    <property type="project" value="UniProtKB-UniRule"/>
</dbReference>
<dbReference type="GO" id="GO:0003735">
    <property type="term" value="F:structural constituent of ribosome"/>
    <property type="evidence" value="ECO:0007669"/>
    <property type="project" value="InterPro"/>
</dbReference>
<dbReference type="GO" id="GO:0006412">
    <property type="term" value="P:translation"/>
    <property type="evidence" value="ECO:0007669"/>
    <property type="project" value="UniProtKB-UniRule"/>
</dbReference>
<dbReference type="CDD" id="cd00349">
    <property type="entry name" value="Ribosomal_L11"/>
    <property type="match status" value="1"/>
</dbReference>
<dbReference type="FunFam" id="1.10.10.250:FF:000001">
    <property type="entry name" value="50S ribosomal protein L11"/>
    <property type="match status" value="1"/>
</dbReference>
<dbReference type="FunFam" id="3.30.1550.10:FF:000001">
    <property type="entry name" value="50S ribosomal protein L11"/>
    <property type="match status" value="1"/>
</dbReference>
<dbReference type="Gene3D" id="1.10.10.250">
    <property type="entry name" value="Ribosomal protein L11, C-terminal domain"/>
    <property type="match status" value="1"/>
</dbReference>
<dbReference type="Gene3D" id="3.30.1550.10">
    <property type="entry name" value="Ribosomal protein L11/L12, N-terminal domain"/>
    <property type="match status" value="1"/>
</dbReference>
<dbReference type="HAMAP" id="MF_00736">
    <property type="entry name" value="Ribosomal_uL11"/>
    <property type="match status" value="1"/>
</dbReference>
<dbReference type="InterPro" id="IPR000911">
    <property type="entry name" value="Ribosomal_uL11"/>
</dbReference>
<dbReference type="InterPro" id="IPR006519">
    <property type="entry name" value="Ribosomal_uL11_bac-typ"/>
</dbReference>
<dbReference type="InterPro" id="IPR020783">
    <property type="entry name" value="Ribosomal_uL11_C"/>
</dbReference>
<dbReference type="InterPro" id="IPR036769">
    <property type="entry name" value="Ribosomal_uL11_C_sf"/>
</dbReference>
<dbReference type="InterPro" id="IPR020784">
    <property type="entry name" value="Ribosomal_uL11_N"/>
</dbReference>
<dbReference type="InterPro" id="IPR036796">
    <property type="entry name" value="Ribosomal_uL11_N_sf"/>
</dbReference>
<dbReference type="NCBIfam" id="TIGR01632">
    <property type="entry name" value="L11_bact"/>
    <property type="match status" value="1"/>
</dbReference>
<dbReference type="PANTHER" id="PTHR11661">
    <property type="entry name" value="60S RIBOSOMAL PROTEIN L12"/>
    <property type="match status" value="1"/>
</dbReference>
<dbReference type="PANTHER" id="PTHR11661:SF1">
    <property type="entry name" value="LARGE RIBOSOMAL SUBUNIT PROTEIN UL11M"/>
    <property type="match status" value="1"/>
</dbReference>
<dbReference type="Pfam" id="PF00298">
    <property type="entry name" value="Ribosomal_L11"/>
    <property type="match status" value="1"/>
</dbReference>
<dbReference type="Pfam" id="PF03946">
    <property type="entry name" value="Ribosomal_L11_N"/>
    <property type="match status" value="1"/>
</dbReference>
<dbReference type="SMART" id="SM00649">
    <property type="entry name" value="RL11"/>
    <property type="match status" value="1"/>
</dbReference>
<dbReference type="SUPFAM" id="SSF54747">
    <property type="entry name" value="Ribosomal L11/L12e N-terminal domain"/>
    <property type="match status" value="1"/>
</dbReference>
<dbReference type="SUPFAM" id="SSF46906">
    <property type="entry name" value="Ribosomal protein L11, C-terminal domain"/>
    <property type="match status" value="1"/>
</dbReference>